<protein>
    <recommendedName>
        <fullName evidence="3">U-actitoxin-Avd8c</fullName>
        <shortName evidence="3">U-AITX-Avd8c</shortName>
    </recommendedName>
    <alternativeName>
        <fullName evidence="2">Avtx-3</fullName>
    </alternativeName>
</protein>
<organism>
    <name type="scientific">Anemonia viridis</name>
    <name type="common">Snakelocks anemone</name>
    <dbReference type="NCBI Taxonomy" id="51769"/>
    <lineage>
        <taxon>Eukaryota</taxon>
        <taxon>Metazoa</taxon>
        <taxon>Cnidaria</taxon>
        <taxon>Anthozoa</taxon>
        <taxon>Hexacorallia</taxon>
        <taxon>Actiniaria</taxon>
        <taxon>Actiniidae</taxon>
        <taxon>Anemonia</taxon>
    </lineage>
</organism>
<keyword id="KW-0166">Nematocyst</keyword>
<keyword id="KW-0964">Secreted</keyword>
<keyword id="KW-0732">Signal</keyword>
<keyword id="KW-0800">Toxin</keyword>
<comment type="subcellular location">
    <subcellularLocation>
        <location evidence="4">Secreted</location>
    </subcellularLocation>
    <subcellularLocation>
        <location evidence="4">Nematocyst</location>
    </subcellularLocation>
</comment>
<comment type="similarity">
    <text evidence="4">Belongs to the sea anemone 8 toxin family.</text>
</comment>
<comment type="caution">
    <text evidence="4">Opinions are divided on whether Anemonia viridis (Forsskal, 1775) and Anemonia sulcata (Pennant, 1777) are separate species.</text>
</comment>
<feature type="signal peptide" evidence="1">
    <location>
        <begin position="1" status="less than"/>
        <end position="16"/>
    </location>
</feature>
<feature type="propeptide" id="PRO_0000433707" evidence="5">
    <location>
        <begin position="17"/>
        <end position="33"/>
    </location>
</feature>
<feature type="chain" id="PRO_0000433708" description="U-actitoxin-Avd8c">
    <location>
        <begin position="34"/>
        <end position="76"/>
    </location>
</feature>
<feature type="non-terminal residue" evidence="2">
    <location>
        <position position="1"/>
    </location>
</feature>
<accession>P0DMZ5</accession>
<proteinExistence type="evidence at transcript level"/>
<name>TX8C_ANEVI</name>
<sequence>LVIVFVVLLGVPLISANEEELLAILQDQRNDARGGCLNRYKSNICGTLVTPMNCITPRTRMGKFARKFCQFMCGIC</sequence>
<reference key="1">
    <citation type="journal article" date="2009" name="BMC Genomics">
        <title>Comprehensive EST analysis of the symbiotic sea anemone, Anemonia viridis.</title>
        <authorList>
            <person name="Sabourault C."/>
            <person name="Ganot P."/>
            <person name="Deleury E."/>
            <person name="Allemand D."/>
            <person name="Furla P."/>
        </authorList>
    </citation>
    <scope>NUCLEOTIDE SEQUENCE [MRNA]</scope>
</reference>
<reference key="2">
    <citation type="journal article" date="2011" name="BMC Genomics">
        <title>The mining of toxin-like polypeptides from EST database by single residue distribution analysis.</title>
        <authorList>
            <person name="Kozlov S."/>
            <person name="Grishin E."/>
        </authorList>
    </citation>
    <scope>NOMENCLATURE</scope>
</reference>
<reference key="3">
    <citation type="journal article" date="2012" name="Toxicon">
        <title>Development of a rational nomenclature for naming peptide and protein toxins from sea anemones.</title>
        <authorList>
            <person name="Oliveira J.S."/>
            <person name="Fuentes-Silva D."/>
            <person name="King G.F."/>
        </authorList>
    </citation>
    <scope>NOMENCLATURE</scope>
</reference>
<dbReference type="EMBL" id="FK734835">
    <property type="status" value="NOT_ANNOTATED_CDS"/>
    <property type="molecule type" value="mRNA"/>
</dbReference>
<dbReference type="SMR" id="P0DMZ5"/>
<dbReference type="GO" id="GO:0005576">
    <property type="term" value="C:extracellular region"/>
    <property type="evidence" value="ECO:0007669"/>
    <property type="project" value="UniProtKB-SubCell"/>
</dbReference>
<dbReference type="GO" id="GO:0042151">
    <property type="term" value="C:nematocyst"/>
    <property type="evidence" value="ECO:0007669"/>
    <property type="project" value="UniProtKB-SubCell"/>
</dbReference>
<dbReference type="GO" id="GO:0090729">
    <property type="term" value="F:toxin activity"/>
    <property type="evidence" value="ECO:0007669"/>
    <property type="project" value="UniProtKB-KW"/>
</dbReference>
<evidence type="ECO:0000255" key="1"/>
<evidence type="ECO:0000303" key="2">
    <source>
    </source>
</evidence>
<evidence type="ECO:0000303" key="3">
    <source>
    </source>
</evidence>
<evidence type="ECO:0000305" key="4"/>
<evidence type="ECO:0000305" key="5">
    <source>
    </source>
</evidence>